<feature type="chain" id="PRO_1000138527" description="Orotidine 5'-phosphate decarboxylase">
    <location>
        <begin position="1"/>
        <end position="245"/>
    </location>
</feature>
<feature type="active site" description="Proton donor" evidence="1">
    <location>
        <position position="73"/>
    </location>
</feature>
<feature type="binding site" evidence="1">
    <location>
        <position position="22"/>
    </location>
    <ligand>
        <name>substrate</name>
    </ligand>
</feature>
<feature type="binding site" evidence="1">
    <location>
        <position position="44"/>
    </location>
    <ligand>
        <name>substrate</name>
    </ligand>
</feature>
<feature type="binding site" evidence="1">
    <location>
        <begin position="71"/>
        <end position="80"/>
    </location>
    <ligand>
        <name>substrate</name>
    </ligand>
</feature>
<feature type="binding site" evidence="1">
    <location>
        <position position="131"/>
    </location>
    <ligand>
        <name>substrate</name>
    </ligand>
</feature>
<feature type="binding site" evidence="1">
    <location>
        <position position="192"/>
    </location>
    <ligand>
        <name>substrate</name>
    </ligand>
</feature>
<feature type="binding site" evidence="1">
    <location>
        <position position="201"/>
    </location>
    <ligand>
        <name>substrate</name>
    </ligand>
</feature>
<feature type="binding site" evidence="1">
    <location>
        <position position="221"/>
    </location>
    <ligand>
        <name>substrate</name>
    </ligand>
</feature>
<feature type="binding site" evidence="1">
    <location>
        <position position="222"/>
    </location>
    <ligand>
        <name>substrate</name>
    </ligand>
</feature>
<reference key="1">
    <citation type="journal article" date="2008" name="DNA Res.">
        <title>Complete genome sequence and comparative analysis of the wild-type commensal Escherichia coli strain SE11 isolated from a healthy adult.</title>
        <authorList>
            <person name="Oshima K."/>
            <person name="Toh H."/>
            <person name="Ogura Y."/>
            <person name="Sasamoto H."/>
            <person name="Morita H."/>
            <person name="Park S.-H."/>
            <person name="Ooka T."/>
            <person name="Iyoda S."/>
            <person name="Taylor T.D."/>
            <person name="Hayashi T."/>
            <person name="Itoh K."/>
            <person name="Hattori M."/>
        </authorList>
    </citation>
    <scope>NUCLEOTIDE SEQUENCE [LARGE SCALE GENOMIC DNA]</scope>
    <source>
        <strain>SE11</strain>
    </source>
</reference>
<protein>
    <recommendedName>
        <fullName evidence="1">Orotidine 5'-phosphate decarboxylase</fullName>
        <ecNumber evidence="1">4.1.1.23</ecNumber>
    </recommendedName>
    <alternativeName>
        <fullName evidence="1">OMP decarboxylase</fullName>
        <shortName evidence="1">OMPDCase</shortName>
        <shortName evidence="1">OMPdecase</shortName>
    </alternativeName>
</protein>
<comment type="function">
    <text evidence="1">Catalyzes the decarboxylation of orotidine 5'-monophosphate (OMP) to uridine 5'-monophosphate (UMP).</text>
</comment>
<comment type="catalytic activity">
    <reaction evidence="1">
        <text>orotidine 5'-phosphate + H(+) = UMP + CO2</text>
        <dbReference type="Rhea" id="RHEA:11596"/>
        <dbReference type="ChEBI" id="CHEBI:15378"/>
        <dbReference type="ChEBI" id="CHEBI:16526"/>
        <dbReference type="ChEBI" id="CHEBI:57538"/>
        <dbReference type="ChEBI" id="CHEBI:57865"/>
        <dbReference type="EC" id="4.1.1.23"/>
    </reaction>
</comment>
<comment type="pathway">
    <text evidence="1">Pyrimidine metabolism; UMP biosynthesis via de novo pathway; UMP from orotate: step 2/2.</text>
</comment>
<comment type="subunit">
    <text evidence="1">Homodimer.</text>
</comment>
<comment type="similarity">
    <text evidence="1">Belongs to the OMP decarboxylase family. Type 1 subfamily.</text>
</comment>
<organism>
    <name type="scientific">Escherichia coli (strain SE11)</name>
    <dbReference type="NCBI Taxonomy" id="409438"/>
    <lineage>
        <taxon>Bacteria</taxon>
        <taxon>Pseudomonadati</taxon>
        <taxon>Pseudomonadota</taxon>
        <taxon>Gammaproteobacteria</taxon>
        <taxon>Enterobacterales</taxon>
        <taxon>Enterobacteriaceae</taxon>
        <taxon>Escherichia</taxon>
    </lineage>
</organism>
<accession>B6I9Z7</accession>
<evidence type="ECO:0000255" key="1">
    <source>
        <dbReference type="HAMAP-Rule" id="MF_01200"/>
    </source>
</evidence>
<sequence>MTLTASSSSRAVTNSPVVVALDYHNRDDALSFVDKIDPRDCRLKVGKEMFTLFGPQFVRELQQRGFDIFLDLKFHDIPNTAAHAVAAAADLGVWMVNVHASGGARMMTAAREALVPFGKDAPLLIAVTVLTSMEASDLVDLGMTLSPADYAERLAALTQKCGLDGVVCSAQEAVRFKQVFGQEFKLVTPGIRPQGSEAGDQRRIMTPEQALSAGVDYMVIGRPVTQSVDPAQTLKAINASLQRSA</sequence>
<gene>
    <name evidence="1" type="primary">pyrF</name>
    <name type="ordered locus">ECSE_1332</name>
</gene>
<name>PYRF_ECOSE</name>
<dbReference type="EC" id="4.1.1.23" evidence="1"/>
<dbReference type="EMBL" id="AP009240">
    <property type="protein sequence ID" value="BAG76856.1"/>
    <property type="molecule type" value="Genomic_DNA"/>
</dbReference>
<dbReference type="RefSeq" id="WP_000176278.1">
    <property type="nucleotide sequence ID" value="NC_011415.1"/>
</dbReference>
<dbReference type="SMR" id="B6I9Z7"/>
<dbReference type="GeneID" id="93775404"/>
<dbReference type="KEGG" id="ecy:ECSE_1332"/>
<dbReference type="HOGENOM" id="CLU_067069_0_0_6"/>
<dbReference type="UniPathway" id="UPA00070">
    <property type="reaction ID" value="UER00120"/>
</dbReference>
<dbReference type="Proteomes" id="UP000008199">
    <property type="component" value="Chromosome"/>
</dbReference>
<dbReference type="GO" id="GO:0005829">
    <property type="term" value="C:cytosol"/>
    <property type="evidence" value="ECO:0007669"/>
    <property type="project" value="TreeGrafter"/>
</dbReference>
<dbReference type="GO" id="GO:0004590">
    <property type="term" value="F:orotidine-5'-phosphate decarboxylase activity"/>
    <property type="evidence" value="ECO:0007669"/>
    <property type="project" value="UniProtKB-UniRule"/>
</dbReference>
<dbReference type="GO" id="GO:0006207">
    <property type="term" value="P:'de novo' pyrimidine nucleobase biosynthetic process"/>
    <property type="evidence" value="ECO:0007669"/>
    <property type="project" value="InterPro"/>
</dbReference>
<dbReference type="GO" id="GO:0044205">
    <property type="term" value="P:'de novo' UMP biosynthetic process"/>
    <property type="evidence" value="ECO:0007669"/>
    <property type="project" value="UniProtKB-UniRule"/>
</dbReference>
<dbReference type="CDD" id="cd04725">
    <property type="entry name" value="OMP_decarboxylase_like"/>
    <property type="match status" value="1"/>
</dbReference>
<dbReference type="FunFam" id="3.20.20.70:FF:000015">
    <property type="entry name" value="Orotidine 5'-phosphate decarboxylase"/>
    <property type="match status" value="1"/>
</dbReference>
<dbReference type="Gene3D" id="3.20.20.70">
    <property type="entry name" value="Aldolase class I"/>
    <property type="match status" value="1"/>
</dbReference>
<dbReference type="HAMAP" id="MF_01200_B">
    <property type="entry name" value="OMPdecase_type1_B"/>
    <property type="match status" value="1"/>
</dbReference>
<dbReference type="InterPro" id="IPR013785">
    <property type="entry name" value="Aldolase_TIM"/>
</dbReference>
<dbReference type="InterPro" id="IPR014732">
    <property type="entry name" value="OMPdecase"/>
</dbReference>
<dbReference type="InterPro" id="IPR018089">
    <property type="entry name" value="OMPdecase_AS"/>
</dbReference>
<dbReference type="InterPro" id="IPR047596">
    <property type="entry name" value="OMPdecase_bac"/>
</dbReference>
<dbReference type="InterPro" id="IPR001754">
    <property type="entry name" value="OMPdeCOase_dom"/>
</dbReference>
<dbReference type="InterPro" id="IPR011060">
    <property type="entry name" value="RibuloseP-bd_barrel"/>
</dbReference>
<dbReference type="NCBIfam" id="NF001273">
    <property type="entry name" value="PRK00230.1"/>
    <property type="match status" value="1"/>
</dbReference>
<dbReference type="NCBIfam" id="TIGR01740">
    <property type="entry name" value="pyrF"/>
    <property type="match status" value="1"/>
</dbReference>
<dbReference type="PANTHER" id="PTHR32119">
    <property type="entry name" value="OROTIDINE 5'-PHOSPHATE DECARBOXYLASE"/>
    <property type="match status" value="1"/>
</dbReference>
<dbReference type="PANTHER" id="PTHR32119:SF2">
    <property type="entry name" value="OROTIDINE 5'-PHOSPHATE DECARBOXYLASE"/>
    <property type="match status" value="1"/>
</dbReference>
<dbReference type="Pfam" id="PF00215">
    <property type="entry name" value="OMPdecase"/>
    <property type="match status" value="1"/>
</dbReference>
<dbReference type="SMART" id="SM00934">
    <property type="entry name" value="OMPdecase"/>
    <property type="match status" value="1"/>
</dbReference>
<dbReference type="SUPFAM" id="SSF51366">
    <property type="entry name" value="Ribulose-phoshate binding barrel"/>
    <property type="match status" value="1"/>
</dbReference>
<dbReference type="PROSITE" id="PS00156">
    <property type="entry name" value="OMPDECASE"/>
    <property type="match status" value="1"/>
</dbReference>
<keyword id="KW-0210">Decarboxylase</keyword>
<keyword id="KW-0456">Lyase</keyword>
<keyword id="KW-0665">Pyrimidine biosynthesis</keyword>
<proteinExistence type="inferred from homology"/>